<dbReference type="EMBL" id="AP009324">
    <property type="protein sequence ID" value="BAF77980.1"/>
    <property type="molecule type" value="Genomic_DNA"/>
</dbReference>
<dbReference type="RefSeq" id="WP_001060837.1">
    <property type="nucleotide sequence ID" value="NC_009782.1"/>
</dbReference>
<dbReference type="SMR" id="A7X111"/>
<dbReference type="KEGG" id="saw:SAHV_1097"/>
<dbReference type="HOGENOM" id="CLU_020088_2_0_9"/>
<dbReference type="GO" id="GO:0005886">
    <property type="term" value="C:plasma membrane"/>
    <property type="evidence" value="ECO:0007669"/>
    <property type="project" value="UniProtKB-SubCell"/>
</dbReference>
<dbReference type="GO" id="GO:0015086">
    <property type="term" value="F:cadmium ion transmembrane transporter activity"/>
    <property type="evidence" value="ECO:0007669"/>
    <property type="project" value="TreeGrafter"/>
</dbReference>
<dbReference type="GO" id="GO:0005384">
    <property type="term" value="F:manganese ion transmembrane transporter activity"/>
    <property type="evidence" value="ECO:0007669"/>
    <property type="project" value="TreeGrafter"/>
</dbReference>
<dbReference type="GO" id="GO:0046872">
    <property type="term" value="F:metal ion binding"/>
    <property type="evidence" value="ECO:0007669"/>
    <property type="project" value="UniProtKB-UniRule"/>
</dbReference>
<dbReference type="GO" id="GO:0015293">
    <property type="term" value="F:symporter activity"/>
    <property type="evidence" value="ECO:0007669"/>
    <property type="project" value="UniProtKB-UniRule"/>
</dbReference>
<dbReference type="GO" id="GO:0034755">
    <property type="term" value="P:iron ion transmembrane transport"/>
    <property type="evidence" value="ECO:0007669"/>
    <property type="project" value="TreeGrafter"/>
</dbReference>
<dbReference type="HAMAP" id="MF_00221">
    <property type="entry name" value="NRAMP"/>
    <property type="match status" value="1"/>
</dbReference>
<dbReference type="InterPro" id="IPR001046">
    <property type="entry name" value="NRAMP_fam"/>
</dbReference>
<dbReference type="NCBIfam" id="TIGR01197">
    <property type="entry name" value="nramp"/>
    <property type="match status" value="1"/>
</dbReference>
<dbReference type="NCBIfam" id="NF037982">
    <property type="entry name" value="Nramp_1"/>
    <property type="match status" value="1"/>
</dbReference>
<dbReference type="NCBIfam" id="NF001923">
    <property type="entry name" value="PRK00701.1"/>
    <property type="match status" value="1"/>
</dbReference>
<dbReference type="PANTHER" id="PTHR11706:SF33">
    <property type="entry name" value="NATURAL RESISTANCE-ASSOCIATED MACROPHAGE PROTEIN 2"/>
    <property type="match status" value="1"/>
</dbReference>
<dbReference type="PANTHER" id="PTHR11706">
    <property type="entry name" value="SOLUTE CARRIER PROTEIN FAMILY 11 MEMBER"/>
    <property type="match status" value="1"/>
</dbReference>
<dbReference type="Pfam" id="PF01566">
    <property type="entry name" value="Nramp"/>
    <property type="match status" value="1"/>
</dbReference>
<dbReference type="PRINTS" id="PR00447">
    <property type="entry name" value="NATRESASSCMP"/>
</dbReference>
<sequence>MNNKRHSTNEQLSLDEINNTIKFDHRSSNKQKFLSFLGPGLLVAVGYMDPGNWITSMQGGAQYGYTLLFVILISSLSAMLLQSMTVRLGIATGMDLAQMTRHYLSRPIAIIFWIIAELAIIATDIAEVIGSAIALNLLFNIPLIVGALITVLDVFLLLFIMKYGFRKIEAIVGTFIFTVLFIFIFEVYISSPQLNAVLNGFIPHSEIITNNGILYIALGIIGATIMPHNLYLHSSIVQSRTYSRHNNEEKAQAIKFATIDSNIQLSIAFVVNCLLLVLGASLFFNSNADDLGGFYDLYHALKTEPVLGATMGAIMSTLFAVALLASGQNSTITGTLAGQIVMEGFLRLHIPNWLRRLITRSLAVIPVIVCLIIFKGNAAKIEQLLVFSQVFLSIALPFCLIPLQLATSNKDLMGPFYNKTWVNIISWTLIIILSILNVYLIVQTFQELQS</sequence>
<organism>
    <name type="scientific">Staphylococcus aureus (strain Mu3 / ATCC 700698)</name>
    <dbReference type="NCBI Taxonomy" id="418127"/>
    <lineage>
        <taxon>Bacteria</taxon>
        <taxon>Bacillati</taxon>
        <taxon>Bacillota</taxon>
        <taxon>Bacilli</taxon>
        <taxon>Bacillales</taxon>
        <taxon>Staphylococcaceae</taxon>
        <taxon>Staphylococcus</taxon>
    </lineage>
</organism>
<keyword id="KW-1003">Cell membrane</keyword>
<keyword id="KW-0406">Ion transport</keyword>
<keyword id="KW-0472">Membrane</keyword>
<keyword id="KW-0769">Symport</keyword>
<keyword id="KW-0812">Transmembrane</keyword>
<keyword id="KW-1133">Transmembrane helix</keyword>
<keyword id="KW-0813">Transport</keyword>
<protein>
    <recommendedName>
        <fullName evidence="1">Divalent metal cation transporter MntH</fullName>
    </recommendedName>
</protein>
<evidence type="ECO:0000255" key="1">
    <source>
        <dbReference type="HAMAP-Rule" id="MF_00221"/>
    </source>
</evidence>
<proteinExistence type="inferred from homology"/>
<name>MNTH_STAA1</name>
<feature type="chain" id="PRO_1000024112" description="Divalent metal cation transporter MntH">
    <location>
        <begin position="1"/>
        <end position="450"/>
    </location>
</feature>
<feature type="transmembrane region" description="Helical" evidence="1">
    <location>
        <begin position="34"/>
        <end position="54"/>
    </location>
</feature>
<feature type="transmembrane region" description="Helical" evidence="1">
    <location>
        <begin position="61"/>
        <end position="81"/>
    </location>
</feature>
<feature type="transmembrane region" description="Helical" evidence="1">
    <location>
        <begin position="108"/>
        <end position="128"/>
    </location>
</feature>
<feature type="transmembrane region" description="Helical" evidence="1">
    <location>
        <begin position="141"/>
        <end position="161"/>
    </location>
</feature>
<feature type="transmembrane region" description="Helical" evidence="1">
    <location>
        <begin position="170"/>
        <end position="190"/>
    </location>
</feature>
<feature type="transmembrane region" description="Helical" evidence="1">
    <location>
        <begin position="212"/>
        <end position="232"/>
    </location>
</feature>
<feature type="transmembrane region" description="Helical" evidence="1">
    <location>
        <begin position="263"/>
        <end position="283"/>
    </location>
</feature>
<feature type="transmembrane region" description="Helical" evidence="1">
    <location>
        <begin position="305"/>
        <end position="325"/>
    </location>
</feature>
<feature type="transmembrane region" description="Helical" evidence="1">
    <location>
        <begin position="361"/>
        <end position="381"/>
    </location>
</feature>
<feature type="transmembrane region" description="Helical" evidence="1">
    <location>
        <begin position="383"/>
        <end position="403"/>
    </location>
</feature>
<feature type="transmembrane region" description="Helical" evidence="1">
    <location>
        <begin position="422"/>
        <end position="442"/>
    </location>
</feature>
<comment type="function">
    <text evidence="1">H(+)-stimulated, divalent metal cation uptake system.</text>
</comment>
<comment type="subcellular location">
    <subcellularLocation>
        <location evidence="1">Cell membrane</location>
        <topology evidence="1">Multi-pass membrane protein</topology>
    </subcellularLocation>
</comment>
<comment type="similarity">
    <text evidence="1">Belongs to the NRAMP family.</text>
</comment>
<gene>
    <name evidence="1" type="primary">mntH</name>
    <name type="ordered locus">SAHV_1097</name>
</gene>
<accession>A7X111</accession>
<reference key="1">
    <citation type="journal article" date="2008" name="Antimicrob. Agents Chemother.">
        <title>Mutated response regulator graR is responsible for phenotypic conversion of Staphylococcus aureus from heterogeneous vancomycin-intermediate resistance to vancomycin-intermediate resistance.</title>
        <authorList>
            <person name="Neoh H.-M."/>
            <person name="Cui L."/>
            <person name="Yuzawa H."/>
            <person name="Takeuchi F."/>
            <person name="Matsuo M."/>
            <person name="Hiramatsu K."/>
        </authorList>
    </citation>
    <scope>NUCLEOTIDE SEQUENCE [LARGE SCALE GENOMIC DNA]</scope>
    <source>
        <strain>Mu3 / ATCC 700698</strain>
    </source>
</reference>